<comment type="subunit">
    <text evidence="1">Part of the 50S ribosomal subunit.</text>
</comment>
<comment type="similarity">
    <text evidence="1">Belongs to the bacterial ribosomal protein bL31 family. Type B subfamily.</text>
</comment>
<feature type="chain" id="PRO_1000014709" description="Large ribosomal subunit protein bL31B">
    <location>
        <begin position="1"/>
        <end position="81"/>
    </location>
</feature>
<dbReference type="EMBL" id="CP000422">
    <property type="protein sequence ID" value="ABJ68589.1"/>
    <property type="molecule type" value="Genomic_DNA"/>
</dbReference>
<dbReference type="RefSeq" id="WP_002833006.1">
    <property type="nucleotide sequence ID" value="NC_008525.1"/>
</dbReference>
<dbReference type="SMR" id="Q03DY3"/>
<dbReference type="STRING" id="278197.PEPE_1568"/>
<dbReference type="GeneID" id="33061654"/>
<dbReference type="KEGG" id="ppe:PEPE_1568"/>
<dbReference type="eggNOG" id="COG0254">
    <property type="taxonomic scope" value="Bacteria"/>
</dbReference>
<dbReference type="HOGENOM" id="CLU_114306_2_2_9"/>
<dbReference type="OrthoDB" id="9803251at2"/>
<dbReference type="Proteomes" id="UP000000773">
    <property type="component" value="Chromosome"/>
</dbReference>
<dbReference type="GO" id="GO:1990904">
    <property type="term" value="C:ribonucleoprotein complex"/>
    <property type="evidence" value="ECO:0007669"/>
    <property type="project" value="UniProtKB-KW"/>
</dbReference>
<dbReference type="GO" id="GO:0005840">
    <property type="term" value="C:ribosome"/>
    <property type="evidence" value="ECO:0007669"/>
    <property type="project" value="UniProtKB-KW"/>
</dbReference>
<dbReference type="GO" id="GO:0003735">
    <property type="term" value="F:structural constituent of ribosome"/>
    <property type="evidence" value="ECO:0007669"/>
    <property type="project" value="InterPro"/>
</dbReference>
<dbReference type="GO" id="GO:0006412">
    <property type="term" value="P:translation"/>
    <property type="evidence" value="ECO:0007669"/>
    <property type="project" value="UniProtKB-UniRule"/>
</dbReference>
<dbReference type="Gene3D" id="4.10.830.30">
    <property type="entry name" value="Ribosomal protein L31"/>
    <property type="match status" value="1"/>
</dbReference>
<dbReference type="HAMAP" id="MF_00502">
    <property type="entry name" value="Ribosomal_bL31_2"/>
    <property type="match status" value="1"/>
</dbReference>
<dbReference type="InterPro" id="IPR034704">
    <property type="entry name" value="Ribosomal_bL28/bL31-like_sf"/>
</dbReference>
<dbReference type="InterPro" id="IPR002150">
    <property type="entry name" value="Ribosomal_bL31"/>
</dbReference>
<dbReference type="InterPro" id="IPR027493">
    <property type="entry name" value="Ribosomal_bL31_B"/>
</dbReference>
<dbReference type="InterPro" id="IPR042105">
    <property type="entry name" value="Ribosomal_bL31_sf"/>
</dbReference>
<dbReference type="NCBIfam" id="TIGR00105">
    <property type="entry name" value="L31"/>
    <property type="match status" value="1"/>
</dbReference>
<dbReference type="NCBIfam" id="NF002462">
    <property type="entry name" value="PRK01678.1"/>
    <property type="match status" value="1"/>
</dbReference>
<dbReference type="PANTHER" id="PTHR33280">
    <property type="entry name" value="50S RIBOSOMAL PROTEIN L31, CHLOROPLASTIC"/>
    <property type="match status" value="1"/>
</dbReference>
<dbReference type="PANTHER" id="PTHR33280:SF1">
    <property type="entry name" value="LARGE RIBOSOMAL SUBUNIT PROTEIN BL31C"/>
    <property type="match status" value="1"/>
</dbReference>
<dbReference type="Pfam" id="PF01197">
    <property type="entry name" value="Ribosomal_L31"/>
    <property type="match status" value="1"/>
</dbReference>
<dbReference type="PRINTS" id="PR01249">
    <property type="entry name" value="RIBOSOMALL31"/>
</dbReference>
<dbReference type="SUPFAM" id="SSF143800">
    <property type="entry name" value="L28p-like"/>
    <property type="match status" value="1"/>
</dbReference>
<accession>Q03DY3</accession>
<name>RL31B_PEDPA</name>
<protein>
    <recommendedName>
        <fullName evidence="1">Large ribosomal subunit protein bL31B</fullName>
    </recommendedName>
    <alternativeName>
        <fullName evidence="2">50S ribosomal protein L31 type B</fullName>
    </alternativeName>
</protein>
<evidence type="ECO:0000255" key="1">
    <source>
        <dbReference type="HAMAP-Rule" id="MF_00502"/>
    </source>
</evidence>
<evidence type="ECO:0000305" key="2"/>
<proteinExistence type="inferred from homology"/>
<reference key="1">
    <citation type="journal article" date="2006" name="Proc. Natl. Acad. Sci. U.S.A.">
        <title>Comparative genomics of the lactic acid bacteria.</title>
        <authorList>
            <person name="Makarova K.S."/>
            <person name="Slesarev A."/>
            <person name="Wolf Y.I."/>
            <person name="Sorokin A."/>
            <person name="Mirkin B."/>
            <person name="Koonin E.V."/>
            <person name="Pavlov A."/>
            <person name="Pavlova N."/>
            <person name="Karamychev V."/>
            <person name="Polouchine N."/>
            <person name="Shakhova V."/>
            <person name="Grigoriev I."/>
            <person name="Lou Y."/>
            <person name="Rohksar D."/>
            <person name="Lucas S."/>
            <person name="Huang K."/>
            <person name="Goodstein D.M."/>
            <person name="Hawkins T."/>
            <person name="Plengvidhya V."/>
            <person name="Welker D."/>
            <person name="Hughes J."/>
            <person name="Goh Y."/>
            <person name="Benson A."/>
            <person name="Baldwin K."/>
            <person name="Lee J.-H."/>
            <person name="Diaz-Muniz I."/>
            <person name="Dosti B."/>
            <person name="Smeianov V."/>
            <person name="Wechter W."/>
            <person name="Barabote R."/>
            <person name="Lorca G."/>
            <person name="Altermann E."/>
            <person name="Barrangou R."/>
            <person name="Ganesan B."/>
            <person name="Xie Y."/>
            <person name="Rawsthorne H."/>
            <person name="Tamir D."/>
            <person name="Parker C."/>
            <person name="Breidt F."/>
            <person name="Broadbent J.R."/>
            <person name="Hutkins R."/>
            <person name="O'Sullivan D."/>
            <person name="Steele J."/>
            <person name="Unlu G."/>
            <person name="Saier M.H. Jr."/>
            <person name="Klaenhammer T."/>
            <person name="Richardson P."/>
            <person name="Kozyavkin S."/>
            <person name="Weimer B.C."/>
            <person name="Mills D.A."/>
        </authorList>
    </citation>
    <scope>NUCLEOTIDE SEQUENCE [LARGE SCALE GENOMIC DNA]</scope>
    <source>
        <strain>ATCC 25745 / CCUG 21536 / LMG 10740 / 183-1w</strain>
    </source>
</reference>
<sequence>MKKGIHPDYHPVVFQDSATGFKFLSGSTVGSAETIKWEDGNEYPLIRVEITSDSHPFYTGRQKFQQADGTVAKFNKKYGLA</sequence>
<keyword id="KW-0687">Ribonucleoprotein</keyword>
<keyword id="KW-0689">Ribosomal protein</keyword>
<gene>
    <name evidence="1" type="primary">rpmE2</name>
    <name type="ordered locus">PEPE_1568</name>
</gene>
<organism>
    <name type="scientific">Pediococcus pentosaceus (strain ATCC 25745 / CCUG 21536 / LMG 10740 / 183-1w)</name>
    <dbReference type="NCBI Taxonomy" id="278197"/>
    <lineage>
        <taxon>Bacteria</taxon>
        <taxon>Bacillati</taxon>
        <taxon>Bacillota</taxon>
        <taxon>Bacilli</taxon>
        <taxon>Lactobacillales</taxon>
        <taxon>Lactobacillaceae</taxon>
        <taxon>Pediococcus</taxon>
    </lineage>
</organism>